<dbReference type="EMBL" id="CP000927">
    <property type="protein sequence ID" value="ABZ73646.1"/>
    <property type="molecule type" value="Genomic_DNA"/>
</dbReference>
<dbReference type="STRING" id="366602.Caul_4526"/>
<dbReference type="KEGG" id="cak:Caul_4526"/>
<dbReference type="eggNOG" id="COG0759">
    <property type="taxonomic scope" value="Bacteria"/>
</dbReference>
<dbReference type="HOGENOM" id="CLU_144811_5_3_5"/>
<dbReference type="OrthoDB" id="9801753at2"/>
<dbReference type="GO" id="GO:0005886">
    <property type="term" value="C:plasma membrane"/>
    <property type="evidence" value="ECO:0007669"/>
    <property type="project" value="UniProtKB-SubCell"/>
</dbReference>
<dbReference type="HAMAP" id="MF_00386">
    <property type="entry name" value="UPF0161_YidD"/>
    <property type="match status" value="1"/>
</dbReference>
<dbReference type="InterPro" id="IPR002696">
    <property type="entry name" value="Membr_insert_effic_factor_YidD"/>
</dbReference>
<dbReference type="NCBIfam" id="TIGR00278">
    <property type="entry name" value="membrane protein insertion efficiency factor YidD"/>
    <property type="match status" value="1"/>
</dbReference>
<dbReference type="PANTHER" id="PTHR33383">
    <property type="entry name" value="MEMBRANE PROTEIN INSERTION EFFICIENCY FACTOR-RELATED"/>
    <property type="match status" value="1"/>
</dbReference>
<dbReference type="PANTHER" id="PTHR33383:SF1">
    <property type="entry name" value="MEMBRANE PROTEIN INSERTION EFFICIENCY FACTOR-RELATED"/>
    <property type="match status" value="1"/>
</dbReference>
<dbReference type="Pfam" id="PF01809">
    <property type="entry name" value="YidD"/>
    <property type="match status" value="1"/>
</dbReference>
<dbReference type="SMART" id="SM01234">
    <property type="entry name" value="Haemolytic"/>
    <property type="match status" value="1"/>
</dbReference>
<comment type="function">
    <text evidence="1">Could be involved in insertion of integral membrane proteins into the membrane.</text>
</comment>
<comment type="subcellular location">
    <subcellularLocation>
        <location evidence="1">Cell inner membrane</location>
        <topology evidence="1">Peripheral membrane protein</topology>
        <orientation evidence="1">Cytoplasmic side</orientation>
    </subcellularLocation>
</comment>
<comment type="similarity">
    <text evidence="1">Belongs to the UPF0161 family.</text>
</comment>
<organism>
    <name type="scientific">Caulobacter sp. (strain K31)</name>
    <dbReference type="NCBI Taxonomy" id="366602"/>
    <lineage>
        <taxon>Bacteria</taxon>
        <taxon>Pseudomonadati</taxon>
        <taxon>Pseudomonadota</taxon>
        <taxon>Alphaproteobacteria</taxon>
        <taxon>Caulobacterales</taxon>
        <taxon>Caulobacteraceae</taxon>
        <taxon>Caulobacter</taxon>
    </lineage>
</organism>
<gene>
    <name type="ordered locus">Caul_4526</name>
</gene>
<accession>B0T0Z8</accession>
<name>YIDD_CAUSK</name>
<feature type="chain" id="PRO_1000080181" description="Putative membrane protein insertion efficiency factor">
    <location>
        <begin position="1"/>
        <end position="84"/>
    </location>
</feature>
<feature type="region of interest" description="Disordered" evidence="2">
    <location>
        <begin position="63"/>
        <end position="84"/>
    </location>
</feature>
<sequence length="84" mass="9419">MTFYERTVDLGLKAYKTTLSPFIGRQCRYLPTCSEYAAQALKDHGPLKGSWLAVGRICRCNPLGGSGYDPPPPPKTPRKWKCEE</sequence>
<keyword id="KW-0997">Cell inner membrane</keyword>
<keyword id="KW-1003">Cell membrane</keyword>
<keyword id="KW-0472">Membrane</keyword>
<reference key="1">
    <citation type="submission" date="2008-01" db="EMBL/GenBank/DDBJ databases">
        <title>Complete sequence of chromosome of Caulobacter sp. K31.</title>
        <authorList>
            <consortium name="US DOE Joint Genome Institute"/>
            <person name="Copeland A."/>
            <person name="Lucas S."/>
            <person name="Lapidus A."/>
            <person name="Barry K."/>
            <person name="Glavina del Rio T."/>
            <person name="Dalin E."/>
            <person name="Tice H."/>
            <person name="Pitluck S."/>
            <person name="Bruce D."/>
            <person name="Goodwin L."/>
            <person name="Thompson L.S."/>
            <person name="Brettin T."/>
            <person name="Detter J.C."/>
            <person name="Han C."/>
            <person name="Schmutz J."/>
            <person name="Larimer F."/>
            <person name="Land M."/>
            <person name="Hauser L."/>
            <person name="Kyrpides N."/>
            <person name="Kim E."/>
            <person name="Stephens C."/>
            <person name="Richardson P."/>
        </authorList>
    </citation>
    <scope>NUCLEOTIDE SEQUENCE [LARGE SCALE GENOMIC DNA]</scope>
    <source>
        <strain>K31</strain>
    </source>
</reference>
<protein>
    <recommendedName>
        <fullName evidence="1">Putative membrane protein insertion efficiency factor</fullName>
    </recommendedName>
</protein>
<evidence type="ECO:0000255" key="1">
    <source>
        <dbReference type="HAMAP-Rule" id="MF_00386"/>
    </source>
</evidence>
<evidence type="ECO:0000256" key="2">
    <source>
        <dbReference type="SAM" id="MobiDB-lite"/>
    </source>
</evidence>
<proteinExistence type="inferred from homology"/>